<sequence length="550" mass="60393">MANSQRSSSLIDPRNGFCTSNSTFYSKRKPLALPSKESLDITTFISSQTYRGKTAFIDAATDHRISFSDLWMAVDRVADCLLHDVGIRRGDVVLVLSPNTISIPIVCLSVMSLGAVLTTANPLNTASEILRQIADSNPKLAFTTPELAPKIASSGISIVLERVEDTLRVPRGLKVVGNLTEMMKKEPSGQAVRNQVHKDDTAMLLYSSGTTGRSKGVNSSHGNLIAHVARYIAEPFEQPQQTFICTVPLFHTFGLLNFVLATLALGTTVVILPRFDLGEMMAAVEKYRATTLILVPPVLVTMINKADQIMKKYDVSFLRTVRCGGAPLSKEVTQGFMKKYPTVDVYQGYALTESNGAGASIESVEESRRYGAVGLLSCGVEARIVDPNTGQVMGLNQTGELWLKGPSIAKGYFRNEEEIITSEGWLKTGDLCYIDNDGFLFIVDRLKELIKYKGYQVPPAELEALLLNHPDILDAAVIPFPDKEAGQFPMAYVARKPESNLCEKKVIDFISKQVAPYKKIRKVAFIDSIPKTPSGKTLRKDLIKFAISKI</sequence>
<comment type="function">
    <text evidence="1">Carboxylate--CoA ligase that may use 4-coumarate as substrate. Follows a two-step reaction mechanism, wherein the carboxylate substrate first undergoes adenylation by ATP, followed by a thioesterification in the presence of CoA to yield the final CoA thioester.</text>
</comment>
<comment type="catalytic activity">
    <reaction evidence="1">
        <text>(E)-4-coumarate + ATP + CoA = (E)-4-coumaroyl-CoA + AMP + diphosphate</text>
        <dbReference type="Rhea" id="RHEA:19641"/>
        <dbReference type="ChEBI" id="CHEBI:12876"/>
        <dbReference type="ChEBI" id="CHEBI:30616"/>
        <dbReference type="ChEBI" id="CHEBI:33019"/>
        <dbReference type="ChEBI" id="CHEBI:57287"/>
        <dbReference type="ChEBI" id="CHEBI:85008"/>
        <dbReference type="ChEBI" id="CHEBI:456215"/>
        <dbReference type="EC" id="6.2.1.12"/>
    </reaction>
    <physiologicalReaction direction="left-to-right" evidence="1">
        <dbReference type="Rhea" id="RHEA:19642"/>
    </physiologicalReaction>
</comment>
<comment type="catalytic activity">
    <reaction evidence="1">
        <text>(E)-4-coumarate + ATP + H(+) = (E)-4-coumaroyl-AMP + diphosphate</text>
        <dbReference type="Rhea" id="RHEA:72419"/>
        <dbReference type="ChEBI" id="CHEBI:12876"/>
        <dbReference type="ChEBI" id="CHEBI:15378"/>
        <dbReference type="ChEBI" id="CHEBI:30616"/>
        <dbReference type="ChEBI" id="CHEBI:33019"/>
        <dbReference type="ChEBI" id="CHEBI:192348"/>
    </reaction>
    <physiologicalReaction direction="left-to-right" evidence="1">
        <dbReference type="Rhea" id="RHEA:72420"/>
    </physiologicalReaction>
</comment>
<comment type="catalytic activity">
    <reaction evidence="1">
        <text>(E)-4-coumaroyl-AMP + CoA = (E)-4-coumaroyl-CoA + AMP + H(+)</text>
        <dbReference type="Rhea" id="RHEA:72423"/>
        <dbReference type="ChEBI" id="CHEBI:15378"/>
        <dbReference type="ChEBI" id="CHEBI:57287"/>
        <dbReference type="ChEBI" id="CHEBI:85008"/>
        <dbReference type="ChEBI" id="CHEBI:192348"/>
        <dbReference type="ChEBI" id="CHEBI:456215"/>
    </reaction>
    <physiologicalReaction direction="left-to-right" evidence="1">
        <dbReference type="Rhea" id="RHEA:72424"/>
    </physiologicalReaction>
</comment>
<comment type="cofactor">
    <cofactor evidence="1">
        <name>Mg(2+)</name>
        <dbReference type="ChEBI" id="CHEBI:18420"/>
    </cofactor>
</comment>
<comment type="subcellular location">
    <subcellularLocation>
        <location evidence="6">Peroxisome</location>
    </subcellularLocation>
</comment>
<comment type="induction">
    <text evidence="4">By wounding or by jasmonic acid (JA) treatment.</text>
</comment>
<comment type="domain">
    <text evidence="2">Both substrate-binding domains (SBD1 and SBD2) are involved in the substrate recognition, and are sufficient to confer the substrate specificity.</text>
</comment>
<comment type="similarity">
    <text evidence="6">Belongs to the ATP-dependent AMP-binding enzyme family.</text>
</comment>
<comment type="sequence caution" evidence="6">
    <conflict type="erroneous gene model prediction">
        <sequence resource="EMBL-CDS" id="BAB11279"/>
    </conflict>
</comment>
<protein>
    <recommendedName>
        <fullName evidence="5">4-coumarate--CoA ligase-like 8</fullName>
        <ecNumber evidence="2">6.2.1.12</ecNumber>
    </recommendedName>
    <alternativeName>
        <fullName evidence="5">4-coumarate--CoA ligase isoform 11</fullName>
        <shortName evidence="5">At4CL11</shortName>
    </alternativeName>
</protein>
<feature type="chain" id="PRO_0000299181" description="4-coumarate--CoA ligase-like 8">
    <location>
        <begin position="1"/>
        <end position="550"/>
    </location>
</feature>
<feature type="region of interest" description="SBD1" evidence="2">
    <location>
        <begin position="276"/>
        <end position="347"/>
    </location>
</feature>
<feature type="region of interest" description="SBD2" evidence="2">
    <location>
        <begin position="348"/>
        <end position="412"/>
    </location>
</feature>
<feature type="short sequence motif" description="Microbody targeting signal" evidence="3">
    <location>
        <begin position="548"/>
        <end position="550"/>
    </location>
</feature>
<feature type="binding site" evidence="1">
    <location>
        <position position="207"/>
    </location>
    <ligand>
        <name>ATP</name>
        <dbReference type="ChEBI" id="CHEBI:30616"/>
    </ligand>
</feature>
<feature type="binding site" evidence="1">
    <location>
        <position position="208"/>
    </location>
    <ligand>
        <name>ATP</name>
        <dbReference type="ChEBI" id="CHEBI:30616"/>
    </ligand>
</feature>
<feature type="binding site" evidence="1">
    <location>
        <position position="209"/>
    </location>
    <ligand>
        <name>ATP</name>
        <dbReference type="ChEBI" id="CHEBI:30616"/>
    </ligand>
</feature>
<feature type="binding site" evidence="1">
    <location>
        <position position="210"/>
    </location>
    <ligand>
        <name>ATP</name>
        <dbReference type="ChEBI" id="CHEBI:30616"/>
    </ligand>
</feature>
<feature type="binding site" evidence="1">
    <location>
        <position position="211"/>
    </location>
    <ligand>
        <name>ATP</name>
        <dbReference type="ChEBI" id="CHEBI:30616"/>
    </ligand>
</feature>
<feature type="binding site" evidence="1">
    <location>
        <position position="215"/>
    </location>
    <ligand>
        <name>ATP</name>
        <dbReference type="ChEBI" id="CHEBI:30616"/>
    </ligand>
</feature>
<feature type="binding site" evidence="1">
    <location>
        <position position="253"/>
    </location>
    <ligand>
        <name>(E)-4-coumaroyl-AMP</name>
        <dbReference type="ChEBI" id="CHEBI:192348"/>
    </ligand>
</feature>
<feature type="binding site" evidence="1">
    <location>
        <position position="274"/>
    </location>
    <ligand>
        <name>CoA</name>
        <dbReference type="ChEBI" id="CHEBI:57287"/>
    </ligand>
</feature>
<feature type="binding site" evidence="1">
    <location>
        <position position="325"/>
    </location>
    <ligand>
        <name>(E)-4-coumaroyl-AMP</name>
        <dbReference type="ChEBI" id="CHEBI:192348"/>
    </ligand>
</feature>
<feature type="binding site" evidence="1">
    <location>
        <position position="347"/>
    </location>
    <ligand>
        <name>(E)-4-coumaroyl-AMP</name>
        <dbReference type="ChEBI" id="CHEBI:192348"/>
    </ligand>
</feature>
<feature type="binding site" evidence="1">
    <location>
        <position position="347"/>
    </location>
    <ligand>
        <name>ATP</name>
        <dbReference type="ChEBI" id="CHEBI:30616"/>
    </ligand>
</feature>
<feature type="binding site" evidence="1">
    <location>
        <position position="348"/>
    </location>
    <ligand>
        <name>(E)-4-coumaroyl-AMP</name>
        <dbReference type="ChEBI" id="CHEBI:192348"/>
    </ligand>
</feature>
<feature type="binding site" evidence="1">
    <location>
        <position position="348"/>
    </location>
    <ligand>
        <name>ATP</name>
        <dbReference type="ChEBI" id="CHEBI:30616"/>
    </ligand>
</feature>
<feature type="binding site" evidence="1">
    <location>
        <position position="352"/>
    </location>
    <ligand>
        <name>(E)-4-coumaroyl-AMP</name>
        <dbReference type="ChEBI" id="CHEBI:192348"/>
    </ligand>
</feature>
<feature type="binding site" evidence="1">
    <location>
        <position position="352"/>
    </location>
    <ligand>
        <name>ATP</name>
        <dbReference type="ChEBI" id="CHEBI:30616"/>
    </ligand>
</feature>
<feature type="binding site" evidence="1">
    <location>
        <position position="430"/>
    </location>
    <ligand>
        <name>ATP</name>
        <dbReference type="ChEBI" id="CHEBI:30616"/>
    </ligand>
</feature>
<feature type="binding site" evidence="1">
    <location>
        <position position="445"/>
    </location>
    <ligand>
        <name>ATP</name>
        <dbReference type="ChEBI" id="CHEBI:30616"/>
    </ligand>
</feature>
<feature type="binding site" evidence="1">
    <location>
        <position position="447"/>
    </location>
    <ligand>
        <name>(E)-4-coumaroyl-AMP</name>
        <dbReference type="ChEBI" id="CHEBI:192348"/>
    </ligand>
</feature>
<feature type="binding site" evidence="1">
    <location>
        <position position="451"/>
    </location>
    <ligand>
        <name>(E)-4-coumaroyl-AMP</name>
        <dbReference type="ChEBI" id="CHEBI:192348"/>
    </ligand>
</feature>
<feature type="binding site" evidence="1">
    <location>
        <position position="453"/>
    </location>
    <ligand>
        <name>CoA</name>
        <dbReference type="ChEBI" id="CHEBI:57287"/>
    </ligand>
</feature>
<feature type="binding site" evidence="1">
    <location>
        <position position="454"/>
    </location>
    <ligand>
        <name>CoA</name>
        <dbReference type="ChEBI" id="CHEBI:57287"/>
    </ligand>
</feature>
<feature type="binding site" evidence="1">
    <location>
        <position position="536"/>
    </location>
    <ligand>
        <name>ATP</name>
        <dbReference type="ChEBI" id="CHEBI:30616"/>
    </ligand>
</feature>
<feature type="sequence conflict" description="In Ref. 1; AAP03015." evidence="6" ref="1">
    <original>M</original>
    <variation>R</variation>
    <location>
        <position position="72"/>
    </location>
</feature>
<name>4CLL8_ARATH</name>
<accession>Q84P26</accession>
<accession>Q8GXU2</accession>
<accession>Q9FF44</accession>
<reference key="1">
    <citation type="journal article" date="2003" name="Plant Physiol.">
        <title>Arabidopsis contains a large superfamily of acyl-activating enzymes. Phylogenetic and biochemical analysis reveals a new class of acyl-coenzyme a synthetases.</title>
        <authorList>
            <person name="Shockey J.M."/>
            <person name="Fulda M.S."/>
            <person name="Browse J."/>
        </authorList>
    </citation>
    <scope>NUCLEOTIDE SEQUENCE [MRNA]</scope>
    <scope>GENE FAMILY ORGANIZATION</scope>
    <source>
        <strain>cv. Wassilewskija</strain>
    </source>
</reference>
<reference key="2">
    <citation type="submission" date="2003-08" db="EMBL/GenBank/DDBJ databases">
        <title>Functional classification of Arabidopsis thaliana 4-coumarate CoA ligase genes.</title>
        <authorList>
            <person name="Lawrence P.K."/>
        </authorList>
    </citation>
    <scope>NUCLEOTIDE SEQUENCE [MRNA]</scope>
</reference>
<reference key="3">
    <citation type="journal article" date="1997" name="DNA Res.">
        <title>Structural analysis of Arabidopsis thaliana chromosome 5. I. Sequence features of the 1.6 Mb regions covered by twenty physically assigned P1 clones.</title>
        <authorList>
            <person name="Sato S."/>
            <person name="Kotani H."/>
            <person name="Nakamura Y."/>
            <person name="Kaneko T."/>
            <person name="Asamizu E."/>
            <person name="Fukami M."/>
            <person name="Miyajima N."/>
            <person name="Tabata S."/>
        </authorList>
    </citation>
    <scope>NUCLEOTIDE SEQUENCE [LARGE SCALE GENOMIC DNA]</scope>
    <source>
        <strain>cv. Columbia</strain>
    </source>
</reference>
<reference key="4">
    <citation type="journal article" date="2017" name="Plant J.">
        <title>Araport11: a complete reannotation of the Arabidopsis thaliana reference genome.</title>
        <authorList>
            <person name="Cheng C.Y."/>
            <person name="Krishnakumar V."/>
            <person name="Chan A.P."/>
            <person name="Thibaud-Nissen F."/>
            <person name="Schobel S."/>
            <person name="Town C.D."/>
        </authorList>
    </citation>
    <scope>GENOME REANNOTATION</scope>
    <source>
        <strain>cv. Columbia</strain>
    </source>
</reference>
<reference key="5">
    <citation type="journal article" date="2002" name="Science">
        <title>Functional annotation of a full-length Arabidopsis cDNA collection.</title>
        <authorList>
            <person name="Seki M."/>
            <person name="Narusaka M."/>
            <person name="Kamiya A."/>
            <person name="Ishida J."/>
            <person name="Satou M."/>
            <person name="Sakurai T."/>
            <person name="Nakajima M."/>
            <person name="Enju A."/>
            <person name="Akiyama K."/>
            <person name="Oono Y."/>
            <person name="Muramatsu M."/>
            <person name="Hayashizaki Y."/>
            <person name="Kawai J."/>
            <person name="Carninci P."/>
            <person name="Itoh M."/>
            <person name="Ishii Y."/>
            <person name="Arakawa T."/>
            <person name="Shibata K."/>
            <person name="Shinagawa A."/>
            <person name="Shinozaki K."/>
        </authorList>
    </citation>
    <scope>NUCLEOTIDE SEQUENCE [LARGE SCALE MRNA]</scope>
    <source>
        <strain>cv. Columbia</strain>
    </source>
</reference>
<reference key="6">
    <citation type="journal article" date="2003" name="Science">
        <title>Empirical analysis of transcriptional activity in the Arabidopsis genome.</title>
        <authorList>
            <person name="Yamada K."/>
            <person name="Lim J."/>
            <person name="Dale J.M."/>
            <person name="Chen H."/>
            <person name="Shinn P."/>
            <person name="Palm C.J."/>
            <person name="Southwick A.M."/>
            <person name="Wu H.C."/>
            <person name="Kim C.J."/>
            <person name="Nguyen M."/>
            <person name="Pham P.K."/>
            <person name="Cheuk R.F."/>
            <person name="Karlin-Newmann G."/>
            <person name="Liu S.X."/>
            <person name="Lam B."/>
            <person name="Sakano H."/>
            <person name="Wu T."/>
            <person name="Yu G."/>
            <person name="Miranda M."/>
            <person name="Quach H.L."/>
            <person name="Tripp M."/>
            <person name="Chang C.H."/>
            <person name="Lee J.M."/>
            <person name="Toriumi M.J."/>
            <person name="Chan M.M."/>
            <person name="Tang C.C."/>
            <person name="Onodera C.S."/>
            <person name="Deng J.M."/>
            <person name="Akiyama K."/>
            <person name="Ansari Y."/>
            <person name="Arakawa T."/>
            <person name="Banh J."/>
            <person name="Banno F."/>
            <person name="Bowser L."/>
            <person name="Brooks S.Y."/>
            <person name="Carninci P."/>
            <person name="Chao Q."/>
            <person name="Choy N."/>
            <person name="Enju A."/>
            <person name="Goldsmith A.D."/>
            <person name="Gurjal M."/>
            <person name="Hansen N.F."/>
            <person name="Hayashizaki Y."/>
            <person name="Johnson-Hopson C."/>
            <person name="Hsuan V.W."/>
            <person name="Iida K."/>
            <person name="Karnes M."/>
            <person name="Khan S."/>
            <person name="Koesema E."/>
            <person name="Ishida J."/>
            <person name="Jiang P.X."/>
            <person name="Jones T."/>
            <person name="Kawai J."/>
            <person name="Kamiya A."/>
            <person name="Meyers C."/>
            <person name="Nakajima M."/>
            <person name="Narusaka M."/>
            <person name="Seki M."/>
            <person name="Sakurai T."/>
            <person name="Satou M."/>
            <person name="Tamse R."/>
            <person name="Vaysberg M."/>
            <person name="Wallender E.K."/>
            <person name="Wong C."/>
            <person name="Yamamura Y."/>
            <person name="Yuan S."/>
            <person name="Shinozaki K."/>
            <person name="Davis R.W."/>
            <person name="Theologis A."/>
            <person name="Ecker J.R."/>
        </authorList>
    </citation>
    <scope>NUCLEOTIDE SEQUENCE [LARGE SCALE MRNA]</scope>
    <source>
        <strain>cv. Columbia</strain>
    </source>
</reference>
<reference key="7">
    <citation type="journal article" date="2003" name="Proc. Natl. Acad. Sci. U.S.A.">
        <title>The substrate specificity-determining amino acid code of 4-coumarate:CoA ligase.</title>
        <authorList>
            <person name="Schneider K."/>
            <person name="Hoevel K."/>
            <person name="Witzel K."/>
            <person name="Hamberger B."/>
            <person name="Schomburg D."/>
            <person name="Kombrink E."/>
            <person name="Stuible H.-P."/>
        </authorList>
    </citation>
    <scope>GENE FAMILY ORGANIZATION</scope>
</reference>
<reference key="8">
    <citation type="journal article" date="2006" name="J. Biol. Chem.">
        <title>Identification of a peroxisomal acyl-activating enzyme involved in the biosynthesis of jasmonic acid in Arabidopsis.</title>
        <authorList>
            <person name="Koo A.J.K."/>
            <person name="Chung H.S."/>
            <person name="Kobayashi Y."/>
            <person name="Howe G.A."/>
        </authorList>
    </citation>
    <scope>INDUCTION</scope>
</reference>
<proteinExistence type="evidence at transcript level"/>
<dbReference type="EC" id="6.2.1.12" evidence="2"/>
<dbReference type="EMBL" id="AY250832">
    <property type="protein sequence ID" value="AAP03015.1"/>
    <property type="molecule type" value="mRNA"/>
</dbReference>
<dbReference type="EMBL" id="AY376735">
    <property type="protein sequence ID" value="AAQ86594.1"/>
    <property type="molecule type" value="mRNA"/>
</dbReference>
<dbReference type="EMBL" id="AB005247">
    <property type="protein sequence ID" value="BAB11279.1"/>
    <property type="status" value="ALT_SEQ"/>
    <property type="molecule type" value="Genomic_DNA"/>
</dbReference>
<dbReference type="EMBL" id="CP002688">
    <property type="protein sequence ID" value="AED94270.1"/>
    <property type="molecule type" value="Genomic_DNA"/>
</dbReference>
<dbReference type="EMBL" id="AK118041">
    <property type="protein sequence ID" value="BAC42672.1"/>
    <property type="molecule type" value="mRNA"/>
</dbReference>
<dbReference type="EMBL" id="BT005689">
    <property type="protein sequence ID" value="AAO64109.1"/>
    <property type="molecule type" value="mRNA"/>
</dbReference>
<dbReference type="SMR" id="Q84P26"/>
<dbReference type="FunCoup" id="Q84P26">
    <property type="interactions" value="554"/>
</dbReference>
<dbReference type="STRING" id="3702.Q84P26"/>
<dbReference type="PaxDb" id="3702-AT5G38120.1"/>
<dbReference type="ProteomicsDB" id="245138"/>
<dbReference type="EnsemblPlants" id="AT5G38120.1">
    <property type="protein sequence ID" value="AT5G38120.1"/>
    <property type="gene ID" value="AT5G38120"/>
</dbReference>
<dbReference type="Gramene" id="AT5G38120.1">
    <property type="protein sequence ID" value="AT5G38120.1"/>
    <property type="gene ID" value="AT5G38120"/>
</dbReference>
<dbReference type="KEGG" id="ath:AT5G38120"/>
<dbReference type="Araport" id="AT5G38120"/>
<dbReference type="TAIR" id="AT5G38120">
    <property type="gene designation" value="4CL8"/>
</dbReference>
<dbReference type="eggNOG" id="KOG1176">
    <property type="taxonomic scope" value="Eukaryota"/>
</dbReference>
<dbReference type="HOGENOM" id="CLU_000022_59_2_1"/>
<dbReference type="InParanoid" id="Q84P26"/>
<dbReference type="OMA" id="LYWMPRF"/>
<dbReference type="PhylomeDB" id="Q84P26"/>
<dbReference type="BioCyc" id="ARA:AT5G38120-MONOMER"/>
<dbReference type="PRO" id="PR:Q84P26"/>
<dbReference type="Proteomes" id="UP000006548">
    <property type="component" value="Chromosome 5"/>
</dbReference>
<dbReference type="ExpressionAtlas" id="Q84P26">
    <property type="expression patterns" value="baseline and differential"/>
</dbReference>
<dbReference type="GO" id="GO:0005777">
    <property type="term" value="C:peroxisome"/>
    <property type="evidence" value="ECO:0000314"/>
    <property type="project" value="TAIR"/>
</dbReference>
<dbReference type="GO" id="GO:0016207">
    <property type="term" value="F:4-coumarate-CoA ligase activity"/>
    <property type="evidence" value="ECO:0007669"/>
    <property type="project" value="RHEA"/>
</dbReference>
<dbReference type="GO" id="GO:0005524">
    <property type="term" value="F:ATP binding"/>
    <property type="evidence" value="ECO:0007669"/>
    <property type="project" value="UniProtKB-KW"/>
</dbReference>
<dbReference type="GO" id="GO:0016405">
    <property type="term" value="F:CoA-ligase activity"/>
    <property type="evidence" value="ECO:0000315"/>
    <property type="project" value="TAIR"/>
</dbReference>
<dbReference type="GO" id="GO:0006744">
    <property type="term" value="P:ubiquinone biosynthetic process"/>
    <property type="evidence" value="ECO:0000315"/>
    <property type="project" value="TAIR"/>
</dbReference>
<dbReference type="CDD" id="cd05904">
    <property type="entry name" value="4CL"/>
    <property type="match status" value="1"/>
</dbReference>
<dbReference type="FunFam" id="3.30.300.30:FF:000007">
    <property type="entry name" value="4-coumarate--CoA ligase 2"/>
    <property type="match status" value="1"/>
</dbReference>
<dbReference type="FunFam" id="3.40.50.12780:FF:000003">
    <property type="entry name" value="Long-chain-fatty-acid--CoA ligase FadD"/>
    <property type="match status" value="1"/>
</dbReference>
<dbReference type="Gene3D" id="3.30.300.30">
    <property type="match status" value="1"/>
</dbReference>
<dbReference type="Gene3D" id="3.40.50.12780">
    <property type="entry name" value="N-terminal domain of ligase-like"/>
    <property type="match status" value="1"/>
</dbReference>
<dbReference type="InterPro" id="IPR025110">
    <property type="entry name" value="AMP-bd_C"/>
</dbReference>
<dbReference type="InterPro" id="IPR045851">
    <property type="entry name" value="AMP-bd_C_sf"/>
</dbReference>
<dbReference type="InterPro" id="IPR020845">
    <property type="entry name" value="AMP-binding_CS"/>
</dbReference>
<dbReference type="InterPro" id="IPR000873">
    <property type="entry name" value="AMP-dep_synth/lig_dom"/>
</dbReference>
<dbReference type="InterPro" id="IPR042099">
    <property type="entry name" value="ANL_N_sf"/>
</dbReference>
<dbReference type="PANTHER" id="PTHR24096:SF358">
    <property type="entry name" value="4-COUMARATE--COA LIGASE-LIKE 8"/>
    <property type="match status" value="1"/>
</dbReference>
<dbReference type="PANTHER" id="PTHR24096">
    <property type="entry name" value="LONG-CHAIN-FATTY-ACID--COA LIGASE"/>
    <property type="match status" value="1"/>
</dbReference>
<dbReference type="Pfam" id="PF00501">
    <property type="entry name" value="AMP-binding"/>
    <property type="match status" value="1"/>
</dbReference>
<dbReference type="Pfam" id="PF13193">
    <property type="entry name" value="AMP-binding_C"/>
    <property type="match status" value="1"/>
</dbReference>
<dbReference type="SUPFAM" id="SSF56801">
    <property type="entry name" value="Acetyl-CoA synthetase-like"/>
    <property type="match status" value="1"/>
</dbReference>
<dbReference type="PROSITE" id="PS00455">
    <property type="entry name" value="AMP_BINDING"/>
    <property type="match status" value="1"/>
</dbReference>
<keyword id="KW-0067">ATP-binding</keyword>
<keyword id="KW-0436">Ligase</keyword>
<keyword id="KW-0460">Magnesium</keyword>
<keyword id="KW-0547">Nucleotide-binding</keyword>
<keyword id="KW-0576">Peroxisome</keyword>
<keyword id="KW-1185">Reference proteome</keyword>
<organism>
    <name type="scientific">Arabidopsis thaliana</name>
    <name type="common">Mouse-ear cress</name>
    <dbReference type="NCBI Taxonomy" id="3702"/>
    <lineage>
        <taxon>Eukaryota</taxon>
        <taxon>Viridiplantae</taxon>
        <taxon>Streptophyta</taxon>
        <taxon>Embryophyta</taxon>
        <taxon>Tracheophyta</taxon>
        <taxon>Spermatophyta</taxon>
        <taxon>Magnoliopsida</taxon>
        <taxon>eudicotyledons</taxon>
        <taxon>Gunneridae</taxon>
        <taxon>Pentapetalae</taxon>
        <taxon>rosids</taxon>
        <taxon>malvids</taxon>
        <taxon>Brassicales</taxon>
        <taxon>Brassicaceae</taxon>
        <taxon>Camelineae</taxon>
        <taxon>Arabidopsis</taxon>
    </lineage>
</organism>
<gene>
    <name evidence="5" type="primary">4CLL8</name>
    <name evidence="7" type="ordered locus">At5g38120</name>
    <name evidence="8" type="ORF">MXA21.23</name>
    <name evidence="8" type="ORF">MXA21_10</name>
</gene>
<evidence type="ECO:0000250" key="1">
    <source>
        <dbReference type="UniProtKB" id="O24146"/>
    </source>
</evidence>
<evidence type="ECO:0000250" key="2">
    <source>
        <dbReference type="UniProtKB" id="Q42524"/>
    </source>
</evidence>
<evidence type="ECO:0000255" key="3"/>
<evidence type="ECO:0000269" key="4">
    <source>
    </source>
</evidence>
<evidence type="ECO:0000303" key="5">
    <source>
    </source>
</evidence>
<evidence type="ECO:0000305" key="6"/>
<evidence type="ECO:0000312" key="7">
    <source>
        <dbReference type="Araport" id="AT5G38120"/>
    </source>
</evidence>
<evidence type="ECO:0000312" key="8">
    <source>
        <dbReference type="EMBL" id="BAB11279.1"/>
    </source>
</evidence>